<accession>Q6AX60</accession>
<evidence type="ECO:0000250" key="1"/>
<evidence type="ECO:0000250" key="2">
    <source>
        <dbReference type="UniProtKB" id="Q3SYG4"/>
    </source>
</evidence>
<evidence type="ECO:0000256" key="3">
    <source>
        <dbReference type="SAM" id="MobiDB-lite"/>
    </source>
</evidence>
<reference key="1">
    <citation type="submission" date="2004-08" db="EMBL/GenBank/DDBJ databases">
        <authorList>
            <consortium name="NIH - Xenopus Gene Collection (XGC) project"/>
        </authorList>
    </citation>
    <scope>NUCLEOTIDE SEQUENCE [LARGE SCALE MRNA]</scope>
    <source>
        <tissue>Brain</tissue>
    </source>
</reference>
<organism>
    <name type="scientific">Xenopus laevis</name>
    <name type="common">African clawed frog</name>
    <dbReference type="NCBI Taxonomy" id="8355"/>
    <lineage>
        <taxon>Eukaryota</taxon>
        <taxon>Metazoa</taxon>
        <taxon>Chordata</taxon>
        <taxon>Craniata</taxon>
        <taxon>Vertebrata</taxon>
        <taxon>Euteleostomi</taxon>
        <taxon>Amphibia</taxon>
        <taxon>Batrachia</taxon>
        <taxon>Anura</taxon>
        <taxon>Pipoidea</taxon>
        <taxon>Pipidae</taxon>
        <taxon>Xenopodinae</taxon>
        <taxon>Xenopus</taxon>
        <taxon>Xenopus</taxon>
    </lineage>
</organism>
<dbReference type="EMBL" id="BC079742">
    <property type="protein sequence ID" value="AAH79742.1"/>
    <property type="molecule type" value="mRNA"/>
</dbReference>
<dbReference type="RefSeq" id="NP_001087412.1">
    <property type="nucleotide sequence ID" value="NM_001093943.1"/>
</dbReference>
<dbReference type="SMR" id="Q6AX60"/>
<dbReference type="GeneID" id="447236"/>
<dbReference type="KEGG" id="xla:447236"/>
<dbReference type="AGR" id="Xenbase:XB-GENE-954602"/>
<dbReference type="CTD" id="447236"/>
<dbReference type="Xenbase" id="XB-GENE-954602">
    <property type="gene designation" value="bbs9.L"/>
</dbReference>
<dbReference type="OrthoDB" id="10262646at2759"/>
<dbReference type="Proteomes" id="UP000186698">
    <property type="component" value="Chromosome 6L"/>
</dbReference>
<dbReference type="Bgee" id="447236">
    <property type="expression patterns" value="Expressed in testis and 19 other cell types or tissues"/>
</dbReference>
<dbReference type="GO" id="GO:0034464">
    <property type="term" value="C:BBSome"/>
    <property type="evidence" value="ECO:0000318"/>
    <property type="project" value="GO_Central"/>
</dbReference>
<dbReference type="GO" id="GO:0034451">
    <property type="term" value="C:centriolar satellite"/>
    <property type="evidence" value="ECO:0007669"/>
    <property type="project" value="UniProtKB-SubCell"/>
</dbReference>
<dbReference type="GO" id="GO:0060170">
    <property type="term" value="C:ciliary membrane"/>
    <property type="evidence" value="ECO:0007669"/>
    <property type="project" value="UniProtKB-SubCell"/>
</dbReference>
<dbReference type="GO" id="GO:0005929">
    <property type="term" value="C:cilium"/>
    <property type="evidence" value="ECO:0000250"/>
    <property type="project" value="UniProtKB"/>
</dbReference>
<dbReference type="GO" id="GO:0005737">
    <property type="term" value="C:cytoplasm"/>
    <property type="evidence" value="ECO:0007669"/>
    <property type="project" value="UniProtKB-KW"/>
</dbReference>
<dbReference type="GO" id="GO:0016020">
    <property type="term" value="C:membrane"/>
    <property type="evidence" value="ECO:0000318"/>
    <property type="project" value="GO_Central"/>
</dbReference>
<dbReference type="GO" id="GO:0060271">
    <property type="term" value="P:cilium assembly"/>
    <property type="evidence" value="ECO:0000318"/>
    <property type="project" value="GO_Central"/>
</dbReference>
<dbReference type="InterPro" id="IPR028074">
    <property type="entry name" value="PHTB1_GAE_dom"/>
</dbReference>
<dbReference type="InterPro" id="IPR028073">
    <property type="entry name" value="PHTB1_N_dom"/>
</dbReference>
<dbReference type="InterPro" id="IPR026511">
    <property type="entry name" value="PTHB1"/>
</dbReference>
<dbReference type="InterPro" id="IPR055364">
    <property type="entry name" value="PTHB1_CtH_dom"/>
</dbReference>
<dbReference type="InterPro" id="IPR055363">
    <property type="entry name" value="PTHB1_hp_dom"/>
</dbReference>
<dbReference type="InterPro" id="IPR055362">
    <property type="entry name" value="PTHB1_pf_dom"/>
</dbReference>
<dbReference type="PANTHER" id="PTHR20991">
    <property type="entry name" value="PARATHYROID HORMONE-RESPONSIVE B1 GENE"/>
    <property type="match status" value="1"/>
</dbReference>
<dbReference type="PANTHER" id="PTHR20991:SF0">
    <property type="entry name" value="PROTEIN PTHB1"/>
    <property type="match status" value="1"/>
</dbReference>
<dbReference type="Pfam" id="PF14727">
    <property type="entry name" value="PHTB1_N"/>
    <property type="match status" value="1"/>
</dbReference>
<dbReference type="Pfam" id="PF23339">
    <property type="entry name" value="PTHB1_CtH"/>
    <property type="match status" value="1"/>
</dbReference>
<dbReference type="Pfam" id="PF14728">
    <property type="entry name" value="PTHB1_GAE"/>
    <property type="match status" value="1"/>
</dbReference>
<dbReference type="Pfam" id="PF23338">
    <property type="entry name" value="PTHB1_hp"/>
    <property type="match status" value="1"/>
</dbReference>
<dbReference type="Pfam" id="PF23337">
    <property type="entry name" value="PTHB1_pf"/>
    <property type="match status" value="1"/>
</dbReference>
<feature type="chain" id="PRO_0000235271" description="Protein PTHB1">
    <location>
        <begin position="1"/>
        <end position="849"/>
    </location>
</feature>
<feature type="region of interest" description="Seven-bladed beta-propeller" evidence="2">
    <location>
        <begin position="1"/>
        <end position="407"/>
    </location>
</feature>
<feature type="region of interest" description="Disordered" evidence="3">
    <location>
        <begin position="825"/>
        <end position="849"/>
    </location>
</feature>
<feature type="compositionally biased region" description="Polar residues" evidence="3">
    <location>
        <begin position="828"/>
        <end position="849"/>
    </location>
</feature>
<feature type="site" description="Critical for protein stability" evidence="2">
    <location>
        <position position="141"/>
    </location>
</feature>
<keyword id="KW-1003">Cell membrane</keyword>
<keyword id="KW-0966">Cell projection</keyword>
<keyword id="KW-0969">Cilium</keyword>
<keyword id="KW-0963">Cytoplasm</keyword>
<keyword id="KW-0206">Cytoskeleton</keyword>
<keyword id="KW-0472">Membrane</keyword>
<keyword id="KW-1185">Reference proteome</keyword>
<protein>
    <recommendedName>
        <fullName>Protein PTHB1</fullName>
    </recommendedName>
    <alternativeName>
        <fullName>Bardet-Biedl syndrome 9 protein homolog</fullName>
    </alternativeName>
    <alternativeName>
        <fullName>Parathyroid hormone-responsive B1 gene protein homolog</fullName>
    </alternativeName>
</protein>
<proteinExistence type="evidence at transcript level"/>
<comment type="function">
    <text evidence="1">Required for ciliogenesis.</text>
</comment>
<comment type="subcellular location">
    <subcellularLocation>
        <location evidence="1">Cell projection</location>
        <location evidence="1">Cilium membrane</location>
    </subcellularLocation>
    <subcellularLocation>
        <location evidence="1">Cytoplasm</location>
        <location evidence="1">Cytoskeleton</location>
        <location evidence="1">Microtubule organizing center</location>
        <location evidence="1">Centrosome</location>
        <location evidence="1">Centriolar satellite</location>
    </subcellularLocation>
</comment>
<gene>
    <name type="primary">bbs9</name>
    <name type="synonym">pthb1</name>
</gene>
<name>PTHB1_XENLA</name>
<sequence>MSLFKARDWWSASLGEKEEFDQGCLCVADVDNSGTAHDKIIVGSFSGYLRIFSPHPLKPGDGMQAEDLLLEVQLRDPVLQVEVGKFVSGTEILHLAVLHPRKLCVYSVSGTLGNVEHGNQYQMKLMYEHNLQRTACSMTHGPFGGVKGRDLICIQSMDGMLMFFEQESYAFGRYLPGFLLPGPLSYSPKTDSFVTVSSSRQVESYKYQVLAVATDADSRKENEQQKMGAGKKVVADWILNIGEQALDISIVSFNQTSFSIFVLGERNFFCLKESGQIRFMKKLDYSPSCFHPYSSVNDGTINTLVGNHNNMLLVYQDVTLKWAAQLSQTPVAVKVANFRDLKGVIVTLSESGQLQCSYLGTDPSLFQVPKVESRDINYEDLDVEMKELQRIIKEATKTQDILPKMEKDDDLTLVATVLPDLDSVSQAVDGEVESEVIPSVSVKLCVRSRLTLQKAVLLISTPAPLALTQDQFIFDSLEPGVSKTASASVFLKGNYPPADLEGSAVVSYSKPTELNPEGVPRIVQCKFRLPLKLVCFPVQPSKVANHKLTIDTNKPPVNLINLFPEFIDQVEEDQVSVVGFQLLAGQKVTLLASKTSQRYRIQSEQFEDLWLITREFILRFQDYFLKQGIKDFTCSFSGPVPLQEYFELIDQHFELRLNGEKYEALLSERAVQFRAIQRLLLTRFKDKTPTPLQNLDTLLDGTYRQVIGIADAAEELQRNLFRAFTRLKSATQLVILLIGLWQKLNKEQIAILEGTFLPLLKDGQELGWEESVDAALSHLLRTCLSKSSKEQALNLTSHLSIPKDTSRLKKHITLLCERMSKGGRLSLSADSGSQQAAEMQGTPINPSVS</sequence>